<dbReference type="EMBL" id="FO081024">
    <property type="protein sequence ID" value="CCD68572.1"/>
    <property type="molecule type" value="Genomic_DNA"/>
</dbReference>
<dbReference type="EMBL" id="FO081024">
    <property type="protein sequence ID" value="CCD68573.1"/>
    <property type="molecule type" value="Genomic_DNA"/>
</dbReference>
<dbReference type="RefSeq" id="NP_491302.1">
    <molecule id="Q966L5-1"/>
    <property type="nucleotide sequence ID" value="NM_058901.4"/>
</dbReference>
<dbReference type="RefSeq" id="NP_871855.1">
    <property type="nucleotide sequence ID" value="NM_182055.3"/>
</dbReference>
<dbReference type="SMR" id="Q966L5"/>
<dbReference type="BioGRID" id="37467">
    <property type="interactions" value="10"/>
</dbReference>
<dbReference type="FunCoup" id="Q966L5">
    <property type="interactions" value="3376"/>
</dbReference>
<dbReference type="STRING" id="6239.E01A2.2a.1"/>
<dbReference type="iPTMnet" id="Q966L5"/>
<dbReference type="PaxDb" id="6239-E01A2.2a.1"/>
<dbReference type="PeptideAtlas" id="Q966L5"/>
<dbReference type="EnsemblMetazoa" id="E01A2.2a.1">
    <molecule id="Q966L5-1"/>
    <property type="protein sequence ID" value="E01A2.2a.1"/>
    <property type="gene ID" value="WBGene00017085"/>
</dbReference>
<dbReference type="EnsemblMetazoa" id="E01A2.2b.1">
    <molecule id="Q966L5-2"/>
    <property type="protein sequence ID" value="E01A2.2b.1"/>
    <property type="gene ID" value="WBGene00017085"/>
</dbReference>
<dbReference type="EnsemblMetazoa" id="E01A2.2b.2">
    <molecule id="Q966L5-2"/>
    <property type="protein sequence ID" value="E01A2.2b.2"/>
    <property type="gene ID" value="WBGene00017085"/>
</dbReference>
<dbReference type="EnsemblMetazoa" id="E01A2.2b.3">
    <molecule id="Q966L5-2"/>
    <property type="protein sequence ID" value="E01A2.2b.3"/>
    <property type="gene ID" value="WBGene00017085"/>
</dbReference>
<dbReference type="EnsemblMetazoa" id="E01A2.2b.4">
    <molecule id="Q966L5-2"/>
    <property type="protein sequence ID" value="E01A2.2b.4"/>
    <property type="gene ID" value="WBGene00017085"/>
</dbReference>
<dbReference type="KEGG" id="cel:CELE_E01A2.2"/>
<dbReference type="UCSC" id="E01A2.2b.1">
    <property type="organism name" value="c. elegans"/>
</dbReference>
<dbReference type="AGR" id="WB:WBGene00017085"/>
<dbReference type="CTD" id="171996"/>
<dbReference type="WormBase" id="E01A2.2a">
    <molecule id="Q966L5-1"/>
    <property type="protein sequence ID" value="CE20643"/>
    <property type="gene ID" value="WBGene00017085"/>
    <property type="gene designation" value="srrt-1"/>
</dbReference>
<dbReference type="WormBase" id="E01A2.2b">
    <molecule id="Q966L5-2"/>
    <property type="protein sequence ID" value="CE33369"/>
    <property type="gene ID" value="WBGene00017085"/>
    <property type="gene designation" value="srrt-1"/>
</dbReference>
<dbReference type="eggNOG" id="KOG2295">
    <property type="taxonomic scope" value="Eukaryota"/>
</dbReference>
<dbReference type="GeneTree" id="ENSGT00390000005492"/>
<dbReference type="InParanoid" id="Q966L5"/>
<dbReference type="OMA" id="GARDEWS"/>
<dbReference type="OrthoDB" id="342064at2759"/>
<dbReference type="PhylomeDB" id="Q966L5"/>
<dbReference type="Reactome" id="R-CEL-6807505">
    <property type="pathway name" value="RNA polymerase II transcribes snRNA genes"/>
</dbReference>
<dbReference type="Reactome" id="R-CEL-72163">
    <property type="pathway name" value="mRNA Splicing - Major Pathway"/>
</dbReference>
<dbReference type="PRO" id="PR:Q966L5"/>
<dbReference type="Proteomes" id="UP000001940">
    <property type="component" value="Chromosome I"/>
</dbReference>
<dbReference type="Bgee" id="WBGene00017085">
    <property type="expression patterns" value="Expressed in embryo and 4 other cell types or tissues"/>
</dbReference>
<dbReference type="GO" id="GO:0016604">
    <property type="term" value="C:nuclear body"/>
    <property type="evidence" value="ECO:0000318"/>
    <property type="project" value="GO_Central"/>
</dbReference>
<dbReference type="GO" id="GO:0005654">
    <property type="term" value="C:nucleoplasm"/>
    <property type="evidence" value="ECO:0000250"/>
    <property type="project" value="UniProtKB"/>
</dbReference>
<dbReference type="GO" id="GO:0031053">
    <property type="term" value="P:primary miRNA processing"/>
    <property type="evidence" value="ECO:0000250"/>
    <property type="project" value="UniProtKB"/>
</dbReference>
<dbReference type="InterPro" id="IPR039727">
    <property type="entry name" value="SE/Ars2"/>
</dbReference>
<dbReference type="InterPro" id="IPR007042">
    <property type="entry name" value="SERRATE/Ars2_C"/>
</dbReference>
<dbReference type="InterPro" id="IPR021933">
    <property type="entry name" value="SERRATE/Ars2_N"/>
</dbReference>
<dbReference type="PANTHER" id="PTHR13165">
    <property type="entry name" value="ARSENITE-RESISTANCE PROTEIN 2"/>
    <property type="match status" value="1"/>
</dbReference>
<dbReference type="PANTHER" id="PTHR13165:SF0">
    <property type="entry name" value="SERRATE RNA EFFECTOR MOLECULE HOMOLOG"/>
    <property type="match status" value="1"/>
</dbReference>
<dbReference type="Pfam" id="PF04959">
    <property type="entry name" value="ARS2"/>
    <property type="match status" value="1"/>
</dbReference>
<dbReference type="Pfam" id="PF12066">
    <property type="entry name" value="SERRATE_Ars2_N"/>
    <property type="match status" value="1"/>
</dbReference>
<accession>Q966L5</accession>
<accession>Q86S87</accession>
<reference key="1">
    <citation type="journal article" date="1998" name="Science">
        <title>Genome sequence of the nematode C. elegans: a platform for investigating biology.</title>
        <authorList>
            <consortium name="The C. elegans sequencing consortium"/>
        </authorList>
    </citation>
    <scope>NUCLEOTIDE SEQUENCE [LARGE SCALE GENOMIC DNA]</scope>
    <scope>ALTERNATIVE SPLICING (ISOFORMS A AND B)</scope>
    <source>
        <strain>Bristol N2</strain>
    </source>
</reference>
<proteinExistence type="inferred from homology"/>
<comment type="function">
    <text evidence="1">Acts as a mediator between the cap-binding complex (CBC) and the primary microRNAs (miRNAs) processing machinery. Contributes to the stability and delivery of capped primary miRNA transcripts to the primary miRNA processing complex, thereby playing a role in RNA-mediated gene silencing (RNAi) by miRNAs (By similarity).</text>
</comment>
<comment type="subcellular location">
    <subcellularLocation>
        <location evidence="1">Nucleus</location>
    </subcellularLocation>
</comment>
<comment type="alternative products">
    <event type="alternative splicing"/>
    <isoform>
        <id>Q966L5-1</id>
        <name>a</name>
        <sequence type="displayed"/>
    </isoform>
    <isoform>
        <id>Q966L5-2</id>
        <name>b</name>
        <sequence type="described" ref="VSP_038124"/>
    </isoform>
</comment>
<comment type="similarity">
    <text evidence="3">Belongs to the ARS2 family.</text>
</comment>
<sequence length="712" mass="80795">MVDSDDDGDRRRDKFARERRDEDYRRGGGGFNRYDNKRPGGRRDDYQVKRSRGDDADDSFDPVSRSGNGSDLPTESDSIYSGPLQTFKKFLTSQEDDISEEDAIKKYNEYKTEHRKHQLERFFRAHKDEEWFRLKYKPDDAKKLREAHLENVQKRLQVFNELKEQGQFNKFSLDFGDAEAIIRMLDSVVVKLENGTEDELKAVLAQKLEDESLADIKKDENGNGTEQPKEEPEVKQESGATEELEEGAIEDGTEKSSNKVNIHRTCSVFLRNIPPGLTYEELEGLCKKSPGFLRLALTDGIAERKFYRRGWATFKRDINIKEICWALNAHRLRETDLNAIINRDITRRVRTNNGIASHKQVAINDLKLAVKLTVLYDKKIGLFNAADEADADREMDIRMGVDLVAASTNPLIKEVKSLVPHDVLNDISEEEAELLGVSNGGEAPAEKIRFERDDNILKALDLLIVYLRIVHSIDFYNHGHYAQEDSMPNRCGLIHVRGQPPSGVSITTDEDGALVVPQKFVNDFISGFNSRIEKGLIEKQYVSEEELEKMGKKDGEKEVEAFIQKNTVELAKDKWLCPLSGKKFKGPEFIRKHLQSKHEDKLEEARAEADFFNNYLADAQRPVDCEPKQAPRDDHRGGGGGERGGYGRERDDDRGPGGGGRNSFGGGGYDRRPQFPPRHSLGGRGGGGRYFEDAPRRQPVSYRDLDAPDDIP</sequence>
<keyword id="KW-0025">Alternative splicing</keyword>
<keyword id="KW-0539">Nucleus</keyword>
<keyword id="KW-1185">Reference proteome</keyword>
<keyword id="KW-0943">RNA-mediated gene silencing</keyword>
<name>SRRT_CAEEL</name>
<gene>
    <name evidence="4" type="primary">srrt-1</name>
    <name type="ORF">E01A2.2</name>
</gene>
<protein>
    <recommendedName>
        <fullName>Serrate RNA effector molecule homolog</fullName>
    </recommendedName>
    <alternativeName>
        <fullName>Arsenite-resistance protein 2 homolog</fullName>
    </alternativeName>
</protein>
<evidence type="ECO:0000250" key="1"/>
<evidence type="ECO:0000256" key="2">
    <source>
        <dbReference type="SAM" id="MobiDB-lite"/>
    </source>
</evidence>
<evidence type="ECO:0000305" key="3"/>
<evidence type="ECO:0000312" key="4">
    <source>
        <dbReference type="WormBase" id="E01A2.2a"/>
    </source>
</evidence>
<feature type="chain" id="PRO_0000220967" description="Serrate RNA effector molecule homolog">
    <location>
        <begin position="1"/>
        <end position="712"/>
    </location>
</feature>
<feature type="region of interest" description="Disordered" evidence="2">
    <location>
        <begin position="1"/>
        <end position="80"/>
    </location>
</feature>
<feature type="region of interest" description="Disordered" evidence="2">
    <location>
        <begin position="214"/>
        <end position="256"/>
    </location>
</feature>
<feature type="region of interest" description="Disordered" evidence="2">
    <location>
        <begin position="620"/>
        <end position="712"/>
    </location>
</feature>
<feature type="compositionally biased region" description="Basic and acidic residues" evidence="2">
    <location>
        <begin position="8"/>
        <end position="26"/>
    </location>
</feature>
<feature type="compositionally biased region" description="Basic and acidic residues" evidence="2">
    <location>
        <begin position="34"/>
        <end position="54"/>
    </location>
</feature>
<feature type="compositionally biased region" description="Polar residues" evidence="2">
    <location>
        <begin position="65"/>
        <end position="79"/>
    </location>
</feature>
<feature type="compositionally biased region" description="Basic and acidic residues" evidence="2">
    <location>
        <begin position="214"/>
        <end position="236"/>
    </location>
</feature>
<feature type="compositionally biased region" description="Acidic residues" evidence="2">
    <location>
        <begin position="240"/>
        <end position="251"/>
    </location>
</feature>
<feature type="compositionally biased region" description="Basic and acidic residues" evidence="2">
    <location>
        <begin position="621"/>
        <end position="637"/>
    </location>
</feature>
<feature type="compositionally biased region" description="Basic and acidic residues" evidence="2">
    <location>
        <begin position="645"/>
        <end position="655"/>
    </location>
</feature>
<feature type="compositionally biased region" description="Gly residues" evidence="2">
    <location>
        <begin position="656"/>
        <end position="668"/>
    </location>
</feature>
<feature type="splice variant" id="VSP_038124" description="In isoform b." evidence="3">
    <location>
        <begin position="1"/>
        <end position="183"/>
    </location>
</feature>
<organism>
    <name type="scientific">Caenorhabditis elegans</name>
    <dbReference type="NCBI Taxonomy" id="6239"/>
    <lineage>
        <taxon>Eukaryota</taxon>
        <taxon>Metazoa</taxon>
        <taxon>Ecdysozoa</taxon>
        <taxon>Nematoda</taxon>
        <taxon>Chromadorea</taxon>
        <taxon>Rhabditida</taxon>
        <taxon>Rhabditina</taxon>
        <taxon>Rhabditomorpha</taxon>
        <taxon>Rhabditoidea</taxon>
        <taxon>Rhabditidae</taxon>
        <taxon>Peloderinae</taxon>
        <taxon>Caenorhabditis</taxon>
    </lineage>
</organism>